<evidence type="ECO:0000255" key="1">
    <source>
        <dbReference type="HAMAP-Rule" id="MF_00367"/>
    </source>
</evidence>
<evidence type="ECO:0000255" key="2">
    <source>
        <dbReference type="PROSITE-ProRule" id="PRU01050"/>
    </source>
</evidence>
<feature type="chain" id="PRO_0000180027" description="GTPase Era">
    <location>
        <begin position="1"/>
        <end position="290"/>
    </location>
</feature>
<feature type="domain" description="Era-type G" evidence="2">
    <location>
        <begin position="2"/>
        <end position="144"/>
    </location>
</feature>
<feature type="domain" description="KH type-2" evidence="1">
    <location>
        <begin position="201"/>
        <end position="279"/>
    </location>
</feature>
<feature type="region of interest" description="G1" evidence="2">
    <location>
        <begin position="10"/>
        <end position="17"/>
    </location>
</feature>
<feature type="region of interest" description="G2" evidence="2">
    <location>
        <begin position="36"/>
        <end position="40"/>
    </location>
</feature>
<feature type="region of interest" description="G3" evidence="2">
    <location>
        <begin position="58"/>
        <end position="61"/>
    </location>
</feature>
<feature type="region of interest" description="G4" evidence="2">
    <location>
        <begin position="97"/>
        <end position="100"/>
    </location>
</feature>
<feature type="region of interest" description="G5" evidence="2">
    <location>
        <begin position="121"/>
        <end position="123"/>
    </location>
</feature>
<feature type="binding site" evidence="1">
    <location>
        <begin position="10"/>
        <end position="17"/>
    </location>
    <ligand>
        <name>GTP</name>
        <dbReference type="ChEBI" id="CHEBI:37565"/>
    </ligand>
</feature>
<feature type="binding site" evidence="1">
    <location>
        <begin position="58"/>
        <end position="62"/>
    </location>
    <ligand>
        <name>GTP</name>
        <dbReference type="ChEBI" id="CHEBI:37565"/>
    </ligand>
</feature>
<feature type="binding site" evidence="1">
    <location>
        <begin position="122"/>
        <end position="125"/>
    </location>
    <ligand>
        <name>GTP</name>
        <dbReference type="ChEBI" id="CHEBI:37565"/>
    </ligand>
</feature>
<accession>P47627</accession>
<keyword id="KW-1003">Cell membrane</keyword>
<keyword id="KW-0963">Cytoplasm</keyword>
<keyword id="KW-0342">GTP-binding</keyword>
<keyword id="KW-0472">Membrane</keyword>
<keyword id="KW-0547">Nucleotide-binding</keyword>
<keyword id="KW-1185">Reference proteome</keyword>
<keyword id="KW-0690">Ribosome biogenesis</keyword>
<keyword id="KW-0694">RNA-binding</keyword>
<keyword id="KW-0699">rRNA-binding</keyword>
<organism>
    <name type="scientific">Mycoplasma genitalium (strain ATCC 33530 / DSM 19775 / NCTC 10195 / G37)</name>
    <name type="common">Mycoplasmoides genitalium</name>
    <dbReference type="NCBI Taxonomy" id="243273"/>
    <lineage>
        <taxon>Bacteria</taxon>
        <taxon>Bacillati</taxon>
        <taxon>Mycoplasmatota</taxon>
        <taxon>Mycoplasmoidales</taxon>
        <taxon>Mycoplasmoidaceae</taxon>
        <taxon>Mycoplasmoides</taxon>
    </lineage>
</organism>
<name>ERA_MYCGE</name>
<comment type="function">
    <text evidence="1">An essential GTPase that binds both GDP and GTP, with rapid nucleotide exchange. Plays a role in 16S rRNA processing and 30S ribosomal subunit biogenesis and possibly also in cell cycle regulation and energy metabolism.</text>
</comment>
<comment type="subunit">
    <text evidence="1">Monomer.</text>
</comment>
<comment type="subcellular location">
    <subcellularLocation>
        <location>Cytoplasm</location>
    </subcellularLocation>
    <subcellularLocation>
        <location evidence="1">Cell membrane</location>
        <topology evidence="1">Peripheral membrane protein</topology>
    </subcellularLocation>
</comment>
<comment type="similarity">
    <text evidence="1 2">Belongs to the TRAFAC class TrmE-Era-EngA-EngB-Septin-like GTPase superfamily. Era GTPase family.</text>
</comment>
<reference key="1">
    <citation type="journal article" date="1995" name="Science">
        <title>The minimal gene complement of Mycoplasma genitalium.</title>
        <authorList>
            <person name="Fraser C.M."/>
            <person name="Gocayne J.D."/>
            <person name="White O."/>
            <person name="Adams M.D."/>
            <person name="Clayton R.A."/>
            <person name="Fleischmann R.D."/>
            <person name="Bult C.J."/>
            <person name="Kerlavage A.R."/>
            <person name="Sutton G.G."/>
            <person name="Kelley J.M."/>
            <person name="Fritchman J.L."/>
            <person name="Weidman J.F."/>
            <person name="Small K.V."/>
            <person name="Sandusky M."/>
            <person name="Fuhrmann J.L."/>
            <person name="Nguyen D.T."/>
            <person name="Utterback T.R."/>
            <person name="Saudek D.M."/>
            <person name="Phillips C.A."/>
            <person name="Merrick J.M."/>
            <person name="Tomb J.-F."/>
            <person name="Dougherty B.A."/>
            <person name="Bott K.F."/>
            <person name="Hu P.-C."/>
            <person name="Lucier T.S."/>
            <person name="Peterson S.N."/>
            <person name="Smith H.O."/>
            <person name="Hutchison C.A. III"/>
            <person name="Venter J.C."/>
        </authorList>
    </citation>
    <scope>NUCLEOTIDE SEQUENCE [LARGE SCALE GENOMIC DNA]</scope>
    <source>
        <strain>ATCC 33530 / DSM 19775 / NCTC 10195 / G37</strain>
    </source>
</reference>
<protein>
    <recommendedName>
        <fullName evidence="1">GTPase Era</fullName>
    </recommendedName>
</protein>
<proteinExistence type="inferred from homology"/>
<gene>
    <name evidence="1" type="primary">era</name>
    <name type="synonym">spg</name>
    <name type="ordered locus">MG387</name>
</gene>
<dbReference type="EMBL" id="L43967">
    <property type="protein sequence ID" value="AAC71614.1"/>
    <property type="molecule type" value="Genomic_DNA"/>
</dbReference>
<dbReference type="PIR" id="H64242">
    <property type="entry name" value="H64242"/>
</dbReference>
<dbReference type="RefSeq" id="WP_010869462.1">
    <property type="nucleotide sequence ID" value="NC_000908.2"/>
</dbReference>
<dbReference type="SMR" id="P47627"/>
<dbReference type="FunCoup" id="P47627">
    <property type="interactions" value="190"/>
</dbReference>
<dbReference type="STRING" id="243273.MG_387"/>
<dbReference type="GeneID" id="88282572"/>
<dbReference type="KEGG" id="mge:MG_387"/>
<dbReference type="eggNOG" id="COG1159">
    <property type="taxonomic scope" value="Bacteria"/>
</dbReference>
<dbReference type="HOGENOM" id="CLU_959156_0_0_14"/>
<dbReference type="InParanoid" id="P47627"/>
<dbReference type="OrthoDB" id="9805918at2"/>
<dbReference type="BioCyc" id="MGEN243273:G1GJ2-483-MONOMER"/>
<dbReference type="Proteomes" id="UP000000807">
    <property type="component" value="Chromosome"/>
</dbReference>
<dbReference type="GO" id="GO:0005829">
    <property type="term" value="C:cytosol"/>
    <property type="evidence" value="ECO:0000318"/>
    <property type="project" value="GO_Central"/>
</dbReference>
<dbReference type="GO" id="GO:0005886">
    <property type="term" value="C:plasma membrane"/>
    <property type="evidence" value="ECO:0007669"/>
    <property type="project" value="UniProtKB-SubCell"/>
</dbReference>
<dbReference type="GO" id="GO:0005525">
    <property type="term" value="F:GTP binding"/>
    <property type="evidence" value="ECO:0007669"/>
    <property type="project" value="UniProtKB-UniRule"/>
</dbReference>
<dbReference type="GO" id="GO:0003924">
    <property type="term" value="F:GTPase activity"/>
    <property type="evidence" value="ECO:0007669"/>
    <property type="project" value="UniProtKB-UniRule"/>
</dbReference>
<dbReference type="GO" id="GO:0043024">
    <property type="term" value="F:ribosomal small subunit binding"/>
    <property type="evidence" value="ECO:0000318"/>
    <property type="project" value="GO_Central"/>
</dbReference>
<dbReference type="GO" id="GO:0019843">
    <property type="term" value="F:rRNA binding"/>
    <property type="evidence" value="ECO:0000318"/>
    <property type="project" value="GO_Central"/>
</dbReference>
<dbReference type="GO" id="GO:0070181">
    <property type="term" value="F:small ribosomal subunit rRNA binding"/>
    <property type="evidence" value="ECO:0007669"/>
    <property type="project" value="UniProtKB-UniRule"/>
</dbReference>
<dbReference type="GO" id="GO:0000028">
    <property type="term" value="P:ribosomal small subunit assembly"/>
    <property type="evidence" value="ECO:0000318"/>
    <property type="project" value="GO_Central"/>
</dbReference>
<dbReference type="CDD" id="cd00880">
    <property type="entry name" value="Era_like"/>
    <property type="match status" value="1"/>
</dbReference>
<dbReference type="CDD" id="cd22534">
    <property type="entry name" value="KH-II_Era"/>
    <property type="match status" value="1"/>
</dbReference>
<dbReference type="Gene3D" id="3.30.300.20">
    <property type="match status" value="1"/>
</dbReference>
<dbReference type="Gene3D" id="3.40.50.300">
    <property type="entry name" value="P-loop containing nucleotide triphosphate hydrolases"/>
    <property type="match status" value="1"/>
</dbReference>
<dbReference type="HAMAP" id="MF_00367">
    <property type="entry name" value="GTPase_Era"/>
    <property type="match status" value="1"/>
</dbReference>
<dbReference type="InterPro" id="IPR030388">
    <property type="entry name" value="G_ERA_dom"/>
</dbReference>
<dbReference type="InterPro" id="IPR006073">
    <property type="entry name" value="GTP-bd"/>
</dbReference>
<dbReference type="InterPro" id="IPR005662">
    <property type="entry name" value="GTPase_Era-like"/>
</dbReference>
<dbReference type="InterPro" id="IPR015946">
    <property type="entry name" value="KH_dom-like_a/b"/>
</dbReference>
<dbReference type="InterPro" id="IPR004044">
    <property type="entry name" value="KH_dom_type_2"/>
</dbReference>
<dbReference type="InterPro" id="IPR009019">
    <property type="entry name" value="KH_sf_prok-type"/>
</dbReference>
<dbReference type="InterPro" id="IPR027417">
    <property type="entry name" value="P-loop_NTPase"/>
</dbReference>
<dbReference type="InterPro" id="IPR005225">
    <property type="entry name" value="Small_GTP-bd"/>
</dbReference>
<dbReference type="NCBIfam" id="TIGR00436">
    <property type="entry name" value="era"/>
    <property type="match status" value="1"/>
</dbReference>
<dbReference type="NCBIfam" id="TIGR00231">
    <property type="entry name" value="small_GTP"/>
    <property type="match status" value="1"/>
</dbReference>
<dbReference type="PANTHER" id="PTHR42698">
    <property type="entry name" value="GTPASE ERA"/>
    <property type="match status" value="1"/>
</dbReference>
<dbReference type="PANTHER" id="PTHR42698:SF1">
    <property type="entry name" value="GTPASE ERA, MITOCHONDRIAL"/>
    <property type="match status" value="1"/>
</dbReference>
<dbReference type="Pfam" id="PF07650">
    <property type="entry name" value="KH_2"/>
    <property type="match status" value="1"/>
</dbReference>
<dbReference type="Pfam" id="PF01926">
    <property type="entry name" value="MMR_HSR1"/>
    <property type="match status" value="1"/>
</dbReference>
<dbReference type="SUPFAM" id="SSF52540">
    <property type="entry name" value="P-loop containing nucleoside triphosphate hydrolases"/>
    <property type="match status" value="1"/>
</dbReference>
<dbReference type="SUPFAM" id="SSF54814">
    <property type="entry name" value="Prokaryotic type KH domain (KH-domain type II)"/>
    <property type="match status" value="1"/>
</dbReference>
<dbReference type="PROSITE" id="PS51713">
    <property type="entry name" value="G_ERA"/>
    <property type="match status" value="1"/>
</dbReference>
<dbReference type="PROSITE" id="PS50823">
    <property type="entry name" value="KH_TYPE_2"/>
    <property type="match status" value="1"/>
</dbReference>
<sequence>MKVLKVGVLGPTNAGKSTLINFLHNDDSLMVSSMNNTTLLSISTEVINQANKNIVFIDVPGFTEKKHSNYELITKEIRKALSGIDVLLLVVRSDQNNKIEFLKTQLQQLKRYQNLTRIFLINKFHQKSLSEVNKAIILEEFKPQKTIEINLLKFDKNLFWSIFKQVELRYNIFRKDINFIDANNDDFKILEGLREQIIFYCKNEIPHIARIEIIEKSFNKEKNLLKIHLVISVPKLSQKKIIIGKNAEMIKAIGIATRKKLLNHFDCDIFIDIFVKTEKQKLPVYSFLSK</sequence>